<organism>
    <name type="scientific">Escherichia coli (strain K12 / MC4100 / BW2952)</name>
    <dbReference type="NCBI Taxonomy" id="595496"/>
    <lineage>
        <taxon>Bacteria</taxon>
        <taxon>Pseudomonadati</taxon>
        <taxon>Pseudomonadota</taxon>
        <taxon>Gammaproteobacteria</taxon>
        <taxon>Enterobacterales</taxon>
        <taxon>Enterobacteriaceae</taxon>
        <taxon>Escherichia</taxon>
    </lineage>
</organism>
<sequence>MTLQQQIIKALGAKPQINAEEEIRRSVDFLKSYLQTYPFIKSLVLGISGGQDSTLAGKLCQMAINELRLETGNESLQFIAVRLPYGVQADEQDCQDAIAFIQPDRVLTVNIKGAVLASEQALREAGIELSDFVRGNEKARERMKAQYSIAGMTSGVVVGTDHAAEAITGFFTKYGDGGTDINPLYRLNKRQGKQLLAALACPEHLYKKAPTADLEDDRPSLPDEVALGVTYDNIDDYLEGKNVPQQVARTIENWYLKTEHKRRPPITVFDDFWKK</sequence>
<name>NADE_ECOBW</name>
<comment type="function">
    <text evidence="1">Catalyzes the ATP-dependent amidation of deamido-NAD to form NAD. Uses ammonia as a nitrogen source.</text>
</comment>
<comment type="catalytic activity">
    <reaction evidence="1">
        <text>deamido-NAD(+) + NH4(+) + ATP = AMP + diphosphate + NAD(+) + H(+)</text>
        <dbReference type="Rhea" id="RHEA:21188"/>
        <dbReference type="ChEBI" id="CHEBI:15378"/>
        <dbReference type="ChEBI" id="CHEBI:28938"/>
        <dbReference type="ChEBI" id="CHEBI:30616"/>
        <dbReference type="ChEBI" id="CHEBI:33019"/>
        <dbReference type="ChEBI" id="CHEBI:57540"/>
        <dbReference type="ChEBI" id="CHEBI:58437"/>
        <dbReference type="ChEBI" id="CHEBI:456215"/>
        <dbReference type="EC" id="6.3.1.5"/>
    </reaction>
</comment>
<comment type="pathway">
    <text evidence="1">Cofactor biosynthesis; NAD(+) biosynthesis; NAD(+) from deamido-NAD(+) (ammonia route): step 1/1.</text>
</comment>
<comment type="subunit">
    <text evidence="1">Homodimer.</text>
</comment>
<comment type="similarity">
    <text evidence="1">Belongs to the NAD synthetase family.</text>
</comment>
<feature type="chain" id="PRO_1000204017" description="NH(3)-dependent NAD(+) synthetase">
    <location>
        <begin position="1"/>
        <end position="275"/>
    </location>
</feature>
<feature type="binding site" evidence="1">
    <location>
        <begin position="46"/>
        <end position="53"/>
    </location>
    <ligand>
        <name>ATP</name>
        <dbReference type="ChEBI" id="CHEBI:30616"/>
    </ligand>
</feature>
<feature type="binding site" evidence="1">
    <location>
        <position position="52"/>
    </location>
    <ligand>
        <name>Mg(2+)</name>
        <dbReference type="ChEBI" id="CHEBI:18420"/>
    </ligand>
</feature>
<feature type="binding site" evidence="1">
    <location>
        <position position="140"/>
    </location>
    <ligand>
        <name>deamido-NAD(+)</name>
        <dbReference type="ChEBI" id="CHEBI:58437"/>
    </ligand>
</feature>
<feature type="binding site" evidence="1">
    <location>
        <position position="160"/>
    </location>
    <ligand>
        <name>ATP</name>
        <dbReference type="ChEBI" id="CHEBI:30616"/>
    </ligand>
</feature>
<feature type="binding site" evidence="1">
    <location>
        <position position="165"/>
    </location>
    <ligand>
        <name>Mg(2+)</name>
        <dbReference type="ChEBI" id="CHEBI:18420"/>
    </ligand>
</feature>
<feature type="binding site" evidence="1">
    <location>
        <position position="173"/>
    </location>
    <ligand>
        <name>deamido-NAD(+)</name>
        <dbReference type="ChEBI" id="CHEBI:58437"/>
    </ligand>
</feature>
<feature type="binding site" evidence="1">
    <location>
        <position position="180"/>
    </location>
    <ligand>
        <name>deamido-NAD(+)</name>
        <dbReference type="ChEBI" id="CHEBI:58437"/>
    </ligand>
</feature>
<feature type="binding site" evidence="1">
    <location>
        <position position="189"/>
    </location>
    <ligand>
        <name>ATP</name>
        <dbReference type="ChEBI" id="CHEBI:30616"/>
    </ligand>
</feature>
<feature type="binding site" evidence="1">
    <location>
        <position position="211"/>
    </location>
    <ligand>
        <name>ATP</name>
        <dbReference type="ChEBI" id="CHEBI:30616"/>
    </ligand>
</feature>
<feature type="binding site" evidence="1">
    <location>
        <begin position="260"/>
        <end position="261"/>
    </location>
    <ligand>
        <name>deamido-NAD(+)</name>
        <dbReference type="ChEBI" id="CHEBI:58437"/>
    </ligand>
</feature>
<reference key="1">
    <citation type="journal article" date="2009" name="J. Bacteriol.">
        <title>Genomic sequencing reveals regulatory mutations and recombinational events in the widely used MC4100 lineage of Escherichia coli K-12.</title>
        <authorList>
            <person name="Ferenci T."/>
            <person name="Zhou Z."/>
            <person name="Betteridge T."/>
            <person name="Ren Y."/>
            <person name="Liu Y."/>
            <person name="Feng L."/>
            <person name="Reeves P.R."/>
            <person name="Wang L."/>
        </authorList>
    </citation>
    <scope>NUCLEOTIDE SEQUENCE [LARGE SCALE GENOMIC DNA]</scope>
    <source>
        <strain>K12 / MC4100 / BW2952</strain>
    </source>
</reference>
<keyword id="KW-0067">ATP-binding</keyword>
<keyword id="KW-0436">Ligase</keyword>
<keyword id="KW-0460">Magnesium</keyword>
<keyword id="KW-0479">Metal-binding</keyword>
<keyword id="KW-0520">NAD</keyword>
<keyword id="KW-0547">Nucleotide-binding</keyword>
<evidence type="ECO:0000255" key="1">
    <source>
        <dbReference type="HAMAP-Rule" id="MF_00193"/>
    </source>
</evidence>
<accession>C4ZZ96</accession>
<dbReference type="EC" id="6.3.1.5" evidence="1"/>
<dbReference type="EMBL" id="CP001396">
    <property type="protein sequence ID" value="ACR63858.1"/>
    <property type="molecule type" value="Genomic_DNA"/>
</dbReference>
<dbReference type="RefSeq" id="WP_000175026.1">
    <property type="nucleotide sequence ID" value="NC_012759.1"/>
</dbReference>
<dbReference type="SMR" id="C4ZZ96"/>
<dbReference type="KEGG" id="ebw:BWG_1553"/>
<dbReference type="HOGENOM" id="CLU_059327_3_0_6"/>
<dbReference type="UniPathway" id="UPA00253">
    <property type="reaction ID" value="UER00333"/>
</dbReference>
<dbReference type="GO" id="GO:0005737">
    <property type="term" value="C:cytoplasm"/>
    <property type="evidence" value="ECO:0007669"/>
    <property type="project" value="InterPro"/>
</dbReference>
<dbReference type="GO" id="GO:0005524">
    <property type="term" value="F:ATP binding"/>
    <property type="evidence" value="ECO:0007669"/>
    <property type="project" value="UniProtKB-UniRule"/>
</dbReference>
<dbReference type="GO" id="GO:0004359">
    <property type="term" value="F:glutaminase activity"/>
    <property type="evidence" value="ECO:0007669"/>
    <property type="project" value="InterPro"/>
</dbReference>
<dbReference type="GO" id="GO:0046872">
    <property type="term" value="F:metal ion binding"/>
    <property type="evidence" value="ECO:0007669"/>
    <property type="project" value="UniProtKB-KW"/>
</dbReference>
<dbReference type="GO" id="GO:0003952">
    <property type="term" value="F:NAD+ synthase (glutamine-hydrolyzing) activity"/>
    <property type="evidence" value="ECO:0007669"/>
    <property type="project" value="InterPro"/>
</dbReference>
<dbReference type="GO" id="GO:0008795">
    <property type="term" value="F:NAD+ synthase activity"/>
    <property type="evidence" value="ECO:0007669"/>
    <property type="project" value="UniProtKB-UniRule"/>
</dbReference>
<dbReference type="GO" id="GO:0009435">
    <property type="term" value="P:NAD biosynthetic process"/>
    <property type="evidence" value="ECO:0007669"/>
    <property type="project" value="UniProtKB-UniRule"/>
</dbReference>
<dbReference type="CDD" id="cd00553">
    <property type="entry name" value="NAD_synthase"/>
    <property type="match status" value="1"/>
</dbReference>
<dbReference type="FunFam" id="3.40.50.620:FF:000015">
    <property type="entry name" value="NH(3)-dependent NAD(+) synthetase"/>
    <property type="match status" value="1"/>
</dbReference>
<dbReference type="Gene3D" id="3.40.50.620">
    <property type="entry name" value="HUPs"/>
    <property type="match status" value="1"/>
</dbReference>
<dbReference type="HAMAP" id="MF_00193">
    <property type="entry name" value="NadE_ammonia_dep"/>
    <property type="match status" value="1"/>
</dbReference>
<dbReference type="InterPro" id="IPR022310">
    <property type="entry name" value="NAD/GMP_synthase"/>
</dbReference>
<dbReference type="InterPro" id="IPR003694">
    <property type="entry name" value="NAD_synthase"/>
</dbReference>
<dbReference type="InterPro" id="IPR022926">
    <property type="entry name" value="NH(3)-dep_NAD(+)_synth"/>
</dbReference>
<dbReference type="InterPro" id="IPR014729">
    <property type="entry name" value="Rossmann-like_a/b/a_fold"/>
</dbReference>
<dbReference type="NCBIfam" id="TIGR00552">
    <property type="entry name" value="nadE"/>
    <property type="match status" value="1"/>
</dbReference>
<dbReference type="NCBIfam" id="NF001979">
    <property type="entry name" value="PRK00768.1"/>
    <property type="match status" value="1"/>
</dbReference>
<dbReference type="PANTHER" id="PTHR23090">
    <property type="entry name" value="NH 3 /GLUTAMINE-DEPENDENT NAD + SYNTHETASE"/>
    <property type="match status" value="1"/>
</dbReference>
<dbReference type="PANTHER" id="PTHR23090:SF7">
    <property type="entry name" value="NH(3)-DEPENDENT NAD(+) SYNTHETASE"/>
    <property type="match status" value="1"/>
</dbReference>
<dbReference type="Pfam" id="PF02540">
    <property type="entry name" value="NAD_synthase"/>
    <property type="match status" value="1"/>
</dbReference>
<dbReference type="SUPFAM" id="SSF52402">
    <property type="entry name" value="Adenine nucleotide alpha hydrolases-like"/>
    <property type="match status" value="1"/>
</dbReference>
<protein>
    <recommendedName>
        <fullName evidence="1">NH(3)-dependent NAD(+) synthetase</fullName>
        <ecNumber evidence="1">6.3.1.5</ecNumber>
    </recommendedName>
</protein>
<proteinExistence type="inferred from homology"/>
<gene>
    <name evidence="1" type="primary">nadE</name>
    <name type="ordered locus">BWG_1553</name>
</gene>